<evidence type="ECO:0000255" key="1">
    <source>
        <dbReference type="HAMAP-Rule" id="MF_00383"/>
    </source>
</evidence>
<evidence type="ECO:0000255" key="2">
    <source>
        <dbReference type="PROSITE-ProRule" id="PRU00469"/>
    </source>
</evidence>
<evidence type="ECO:0000256" key="3">
    <source>
        <dbReference type="SAM" id="MobiDB-lite"/>
    </source>
</evidence>
<reference key="1">
    <citation type="journal article" date="2002" name="Proc. Natl. Acad. Sci. U.S.A.">
        <title>The complete genome of hyperthermophile Methanopyrus kandleri AV19 and monophyly of archaeal methanogens.</title>
        <authorList>
            <person name="Slesarev A.I."/>
            <person name="Mezhevaya K.V."/>
            <person name="Makarova K.S."/>
            <person name="Polushin N.N."/>
            <person name="Shcherbinina O.V."/>
            <person name="Shakhova V.V."/>
            <person name="Belova G.I."/>
            <person name="Aravind L."/>
            <person name="Natale D.A."/>
            <person name="Rogozin I.B."/>
            <person name="Tatusov R.L."/>
            <person name="Wolf Y.I."/>
            <person name="Stetter K.O."/>
            <person name="Malykh A.G."/>
            <person name="Koonin E.V."/>
            <person name="Kozyavkin S.A."/>
        </authorList>
    </citation>
    <scope>NUCLEOTIDE SEQUENCE [LARGE SCALE GENOMIC DNA]</scope>
    <source>
        <strain>AV19 / DSM 6324 / JCM 9639 / NBRC 100938</strain>
    </source>
</reference>
<organism>
    <name type="scientific">Methanopyrus kandleri (strain AV19 / DSM 6324 / JCM 9639 / NBRC 100938)</name>
    <dbReference type="NCBI Taxonomy" id="190192"/>
    <lineage>
        <taxon>Archaea</taxon>
        <taxon>Methanobacteriati</taxon>
        <taxon>Methanobacteriota</taxon>
        <taxon>Methanomada group</taxon>
        <taxon>Methanopyri</taxon>
        <taxon>Methanopyrales</taxon>
        <taxon>Methanopyraceae</taxon>
        <taxon>Methanopyrus</taxon>
    </lineage>
</organism>
<accession>Q8TX21</accession>
<keyword id="KW-0479">Metal-binding</keyword>
<keyword id="KW-1185">Reference proteome</keyword>
<keyword id="KW-0677">Repeat</keyword>
<keyword id="KW-0804">Transcription</keyword>
<keyword id="KW-0805">Transcription regulation</keyword>
<keyword id="KW-0862">Zinc</keyword>
<keyword id="KW-0863">Zinc-finger</keyword>
<comment type="function">
    <text evidence="1">Stabilizes TBP binding to an archaeal box-A promoter. Also responsible for recruiting RNA polymerase II to the pre-initiation complex (DNA-TBP-TFIIB).</text>
</comment>
<comment type="similarity">
    <text evidence="1">Belongs to the TFIIB family.</text>
</comment>
<proteinExistence type="inferred from homology"/>
<protein>
    <recommendedName>
        <fullName evidence="1">Transcription initiation factor IIB</fullName>
        <shortName evidence="1">TFIIB</shortName>
    </recommendedName>
</protein>
<feature type="chain" id="PRO_0000119321" description="Transcription initiation factor IIB">
    <location>
        <begin position="1"/>
        <end position="307"/>
    </location>
</feature>
<feature type="repeat" description="1">
    <location>
        <begin position="123"/>
        <end position="207"/>
    </location>
</feature>
<feature type="repeat" description="2">
    <location>
        <begin position="218"/>
        <end position="299"/>
    </location>
</feature>
<feature type="zinc finger region" description="TFIIB-type" evidence="2">
    <location>
        <begin position="11"/>
        <end position="42"/>
    </location>
</feature>
<feature type="region of interest" description="Disordered" evidence="3">
    <location>
        <begin position="48"/>
        <end position="69"/>
    </location>
</feature>
<feature type="compositionally biased region" description="Basic and acidic residues" evidence="3">
    <location>
        <begin position="50"/>
        <end position="69"/>
    </location>
</feature>
<feature type="binding site" evidence="2">
    <location>
        <position position="15"/>
    </location>
    <ligand>
        <name>Zn(2+)</name>
        <dbReference type="ChEBI" id="CHEBI:29105"/>
    </ligand>
</feature>
<feature type="binding site" evidence="2">
    <location>
        <position position="18"/>
    </location>
    <ligand>
        <name>Zn(2+)</name>
        <dbReference type="ChEBI" id="CHEBI:29105"/>
    </ligand>
</feature>
<feature type="binding site" evidence="2">
    <location>
        <position position="34"/>
    </location>
    <ligand>
        <name>Zn(2+)</name>
        <dbReference type="ChEBI" id="CHEBI:29105"/>
    </ligand>
</feature>
<feature type="binding site" evidence="2">
    <location>
        <position position="37"/>
    </location>
    <ligand>
        <name>Zn(2+)</name>
        <dbReference type="ChEBI" id="CHEBI:29105"/>
    </ligand>
</feature>
<name>TF2B_METKA</name>
<dbReference type="EMBL" id="AE009439">
    <property type="protein sequence ID" value="AAM02071.1"/>
    <property type="molecule type" value="Genomic_DNA"/>
</dbReference>
<dbReference type="RefSeq" id="WP_011019226.1">
    <property type="nucleotide sequence ID" value="NC_003551.1"/>
</dbReference>
<dbReference type="SMR" id="Q8TX21"/>
<dbReference type="FunCoup" id="Q8TX21">
    <property type="interactions" value="2"/>
</dbReference>
<dbReference type="STRING" id="190192.MK0858"/>
<dbReference type="PaxDb" id="190192-MK0858"/>
<dbReference type="EnsemblBacteria" id="AAM02071">
    <property type="protein sequence ID" value="AAM02071"/>
    <property type="gene ID" value="MK0858"/>
</dbReference>
<dbReference type="GeneID" id="1476959"/>
<dbReference type="KEGG" id="mka:MK0858"/>
<dbReference type="PATRIC" id="fig|190192.8.peg.901"/>
<dbReference type="HOGENOM" id="CLU_043736_0_1_2"/>
<dbReference type="InParanoid" id="Q8TX21"/>
<dbReference type="OrthoDB" id="7429at2157"/>
<dbReference type="Proteomes" id="UP000001826">
    <property type="component" value="Chromosome"/>
</dbReference>
<dbReference type="GO" id="GO:0097550">
    <property type="term" value="C:transcription preinitiation complex"/>
    <property type="evidence" value="ECO:0007669"/>
    <property type="project" value="TreeGrafter"/>
</dbReference>
<dbReference type="GO" id="GO:0003700">
    <property type="term" value="F:DNA-binding transcription factor activity"/>
    <property type="evidence" value="ECO:0007669"/>
    <property type="project" value="UniProtKB-UniRule"/>
</dbReference>
<dbReference type="GO" id="GO:0017025">
    <property type="term" value="F:TBP-class protein binding"/>
    <property type="evidence" value="ECO:0007669"/>
    <property type="project" value="InterPro"/>
</dbReference>
<dbReference type="GO" id="GO:0008270">
    <property type="term" value="F:zinc ion binding"/>
    <property type="evidence" value="ECO:0007669"/>
    <property type="project" value="UniProtKB-UniRule"/>
</dbReference>
<dbReference type="GO" id="GO:0070897">
    <property type="term" value="P:transcription preinitiation complex assembly"/>
    <property type="evidence" value="ECO:0007669"/>
    <property type="project" value="InterPro"/>
</dbReference>
<dbReference type="CDD" id="cd20550">
    <property type="entry name" value="CYCLIN_TFIIB_archaea_like_rpt2"/>
    <property type="match status" value="1"/>
</dbReference>
<dbReference type="FunFam" id="1.10.472.10:FF:000023">
    <property type="entry name" value="Transcription initiation factor IIB"/>
    <property type="match status" value="1"/>
</dbReference>
<dbReference type="FunFam" id="1.10.472.170:FF:000001">
    <property type="entry name" value="Transcription initiation factor IIB"/>
    <property type="match status" value="1"/>
</dbReference>
<dbReference type="Gene3D" id="1.10.472.170">
    <property type="match status" value="1"/>
</dbReference>
<dbReference type="Gene3D" id="1.10.472.10">
    <property type="entry name" value="Cyclin-like"/>
    <property type="match status" value="1"/>
</dbReference>
<dbReference type="HAMAP" id="MF_00383">
    <property type="entry name" value="TF2B_arch"/>
    <property type="match status" value="1"/>
</dbReference>
<dbReference type="InterPro" id="IPR013763">
    <property type="entry name" value="Cyclin-like_dom"/>
</dbReference>
<dbReference type="InterPro" id="IPR036915">
    <property type="entry name" value="Cyclin-like_sf"/>
</dbReference>
<dbReference type="InterPro" id="IPR000812">
    <property type="entry name" value="TFIIB"/>
</dbReference>
<dbReference type="InterPro" id="IPR023484">
    <property type="entry name" value="TFIIB_arc"/>
</dbReference>
<dbReference type="InterPro" id="IPR023486">
    <property type="entry name" value="TFIIB_CS"/>
</dbReference>
<dbReference type="InterPro" id="IPR013150">
    <property type="entry name" value="TFIIB_cyclin"/>
</dbReference>
<dbReference type="InterPro" id="IPR013137">
    <property type="entry name" value="Znf_TFIIB"/>
</dbReference>
<dbReference type="NCBIfam" id="NF001658">
    <property type="entry name" value="PRK00423.1"/>
    <property type="match status" value="1"/>
</dbReference>
<dbReference type="PANTHER" id="PTHR11618:SF13">
    <property type="entry name" value="TRANSCRIPTION INITIATION FACTOR IIB"/>
    <property type="match status" value="1"/>
</dbReference>
<dbReference type="PANTHER" id="PTHR11618">
    <property type="entry name" value="TRANSCRIPTION INITIATION FACTOR IIB-RELATED"/>
    <property type="match status" value="1"/>
</dbReference>
<dbReference type="Pfam" id="PF00382">
    <property type="entry name" value="TFIIB"/>
    <property type="match status" value="2"/>
</dbReference>
<dbReference type="Pfam" id="PF08271">
    <property type="entry name" value="Zn_Ribbon_TF"/>
    <property type="match status" value="1"/>
</dbReference>
<dbReference type="PRINTS" id="PR00685">
    <property type="entry name" value="TIFACTORIIB"/>
</dbReference>
<dbReference type="SMART" id="SM00385">
    <property type="entry name" value="CYCLIN"/>
    <property type="match status" value="2"/>
</dbReference>
<dbReference type="SUPFAM" id="SSF47954">
    <property type="entry name" value="Cyclin-like"/>
    <property type="match status" value="2"/>
</dbReference>
<dbReference type="SUPFAM" id="SSF57783">
    <property type="entry name" value="Zinc beta-ribbon"/>
    <property type="match status" value="1"/>
</dbReference>
<dbReference type="PROSITE" id="PS00782">
    <property type="entry name" value="TFIIB"/>
    <property type="match status" value="2"/>
</dbReference>
<dbReference type="PROSITE" id="PS51134">
    <property type="entry name" value="ZF_TFIIB"/>
    <property type="match status" value="1"/>
</dbReference>
<gene>
    <name evidence="1" type="primary">tfb</name>
    <name type="ordered locus">MK0858</name>
</gene>
<sequence>MAASERNTGKFTEECPACGSAEIVFDEERGEYVCANCGLVTEDPVIDPGPEWRHFNPDQRQRRSRTGEPVKLRLPDKGISTIIDRELRDSGGKKNPRMRRIRTWDARIKVSGSRERNFFQAFLELENLASKLQLPESVRELAASIYRKAYKEGIVRGRGIESVLGAAVFAACKEARVPRTAREIAEALGVSDENEILRAYRVLQRRLNLKQKPTEPSDHLPRFASKLGVSENVQAKAQEIIEKAKEKGITVGKGPAGVAAAALYIASILEGERRTQKEIAEVARVTEVTIRNRYKEICEALGIELHP</sequence>